<keyword id="KW-0378">Hydrolase</keyword>
<keyword id="KW-0464">Manganese</keyword>
<comment type="catalytic activity">
    <reaction evidence="1">
        <text>adenine + H2O + H(+) = hypoxanthine + NH4(+)</text>
        <dbReference type="Rhea" id="RHEA:23688"/>
        <dbReference type="ChEBI" id="CHEBI:15377"/>
        <dbReference type="ChEBI" id="CHEBI:15378"/>
        <dbReference type="ChEBI" id="CHEBI:16708"/>
        <dbReference type="ChEBI" id="CHEBI:17368"/>
        <dbReference type="ChEBI" id="CHEBI:28938"/>
        <dbReference type="EC" id="3.5.4.2"/>
    </reaction>
</comment>
<comment type="cofactor">
    <cofactor evidence="1">
        <name>Mn(2+)</name>
        <dbReference type="ChEBI" id="CHEBI:29035"/>
    </cofactor>
</comment>
<comment type="similarity">
    <text evidence="1">Belongs to the metallo-dependent hydrolases superfamily. Adenine deaminase family.</text>
</comment>
<reference key="1">
    <citation type="submission" date="2008-01" db="EMBL/GenBank/DDBJ databases">
        <title>Complete sequence of Shewanella halifaxensis HAW-EB4.</title>
        <authorList>
            <consortium name="US DOE Joint Genome Institute"/>
            <person name="Copeland A."/>
            <person name="Lucas S."/>
            <person name="Lapidus A."/>
            <person name="Glavina del Rio T."/>
            <person name="Dalin E."/>
            <person name="Tice H."/>
            <person name="Bruce D."/>
            <person name="Goodwin L."/>
            <person name="Pitluck S."/>
            <person name="Sims D."/>
            <person name="Brettin T."/>
            <person name="Detter J.C."/>
            <person name="Han C."/>
            <person name="Kuske C.R."/>
            <person name="Schmutz J."/>
            <person name="Larimer F."/>
            <person name="Land M."/>
            <person name="Hauser L."/>
            <person name="Kyrpides N."/>
            <person name="Kim E."/>
            <person name="Zhao J.-S."/>
            <person name="Richardson P."/>
        </authorList>
    </citation>
    <scope>NUCLEOTIDE SEQUENCE [LARGE SCALE GENOMIC DNA]</scope>
    <source>
        <strain>HAW-EB4</strain>
    </source>
</reference>
<feature type="chain" id="PRO_1000215363" description="Adenine deaminase">
    <location>
        <begin position="1"/>
        <end position="587"/>
    </location>
</feature>
<protein>
    <recommendedName>
        <fullName evidence="1">Adenine deaminase</fullName>
        <shortName evidence="1">Adenase</shortName>
        <shortName evidence="1">Adenine aminase</shortName>
        <ecNumber evidence="1">3.5.4.2</ecNumber>
    </recommendedName>
</protein>
<proteinExistence type="inferred from homology"/>
<gene>
    <name evidence="1" type="primary">ade</name>
    <name type="ordered locus">Shal_2836</name>
</gene>
<accession>B0TMM7</accession>
<dbReference type="EC" id="3.5.4.2" evidence="1"/>
<dbReference type="EMBL" id="CP000931">
    <property type="protein sequence ID" value="ABZ77387.1"/>
    <property type="molecule type" value="Genomic_DNA"/>
</dbReference>
<dbReference type="RefSeq" id="WP_012277914.1">
    <property type="nucleotide sequence ID" value="NC_010334.1"/>
</dbReference>
<dbReference type="SMR" id="B0TMM7"/>
<dbReference type="STRING" id="458817.Shal_2836"/>
<dbReference type="KEGG" id="shl:Shal_2836"/>
<dbReference type="eggNOG" id="COG1001">
    <property type="taxonomic scope" value="Bacteria"/>
</dbReference>
<dbReference type="HOGENOM" id="CLU_027935_0_0_6"/>
<dbReference type="OrthoDB" id="9031471at2"/>
<dbReference type="Proteomes" id="UP000001317">
    <property type="component" value="Chromosome"/>
</dbReference>
<dbReference type="GO" id="GO:0000034">
    <property type="term" value="F:adenine deaminase activity"/>
    <property type="evidence" value="ECO:0007669"/>
    <property type="project" value="UniProtKB-UniRule"/>
</dbReference>
<dbReference type="GO" id="GO:0006146">
    <property type="term" value="P:adenine catabolic process"/>
    <property type="evidence" value="ECO:0007669"/>
    <property type="project" value="InterPro"/>
</dbReference>
<dbReference type="FunFam" id="3.20.20.140:FF:000016">
    <property type="entry name" value="Adenine deaminase"/>
    <property type="match status" value="1"/>
</dbReference>
<dbReference type="Gene3D" id="3.20.20.140">
    <property type="entry name" value="Metal-dependent hydrolases"/>
    <property type="match status" value="1"/>
</dbReference>
<dbReference type="Gene3D" id="2.30.40.10">
    <property type="entry name" value="Urease, subunit C, domain 1"/>
    <property type="match status" value="1"/>
</dbReference>
<dbReference type="HAMAP" id="MF_01518">
    <property type="entry name" value="Adenine_deamin"/>
    <property type="match status" value="1"/>
</dbReference>
<dbReference type="InterPro" id="IPR006679">
    <property type="entry name" value="Adenine_deam"/>
</dbReference>
<dbReference type="InterPro" id="IPR026912">
    <property type="entry name" value="Adenine_deam_C"/>
</dbReference>
<dbReference type="InterPro" id="IPR006680">
    <property type="entry name" value="Amidohydro-rel"/>
</dbReference>
<dbReference type="InterPro" id="IPR011059">
    <property type="entry name" value="Metal-dep_hydrolase_composite"/>
</dbReference>
<dbReference type="InterPro" id="IPR032466">
    <property type="entry name" value="Metal_Hydrolase"/>
</dbReference>
<dbReference type="NCBIfam" id="TIGR01178">
    <property type="entry name" value="ade"/>
    <property type="match status" value="1"/>
</dbReference>
<dbReference type="NCBIfam" id="NF007457">
    <property type="entry name" value="PRK10027.1"/>
    <property type="match status" value="1"/>
</dbReference>
<dbReference type="PANTHER" id="PTHR11113:SF2">
    <property type="entry name" value="ADENINE DEAMINASE"/>
    <property type="match status" value="1"/>
</dbReference>
<dbReference type="PANTHER" id="PTHR11113">
    <property type="entry name" value="N-ACETYLGLUCOSAMINE-6-PHOSPHATE DEACETYLASE"/>
    <property type="match status" value="1"/>
</dbReference>
<dbReference type="Pfam" id="PF13382">
    <property type="entry name" value="Adenine_deam_C"/>
    <property type="match status" value="1"/>
</dbReference>
<dbReference type="Pfam" id="PF01979">
    <property type="entry name" value="Amidohydro_1"/>
    <property type="match status" value="1"/>
</dbReference>
<dbReference type="SUPFAM" id="SSF51338">
    <property type="entry name" value="Composite domain of metallo-dependent hydrolases"/>
    <property type="match status" value="1"/>
</dbReference>
<dbReference type="SUPFAM" id="SSF51556">
    <property type="entry name" value="Metallo-dependent hydrolases"/>
    <property type="match status" value="1"/>
</dbReference>
<name>ADEC_SHEHH</name>
<sequence length="587" mass="64176">MSNLMDKHTQKIDPQSLQHMLSVLRLEQLGDLKLTNVSLLDLINGEVIPGPILIDKGHIIAVGQEVDLLAAVRVVDCHGQIAVPGFIDAHMHVESSTMTPFEFERTTLPLGTTSIVCDPHELVNVMGRQGIDWFLRCSETMHQNMFVQISSCVPAVAGLDINGSDFSLDEMAAYREHKHVLGLAEVMDYPAVINGEQAMQDKLTTFNNLNLDGHSPLLSGLSLSAYVACGIQNCHETTNVEEGKEKLAKGMAVIMREGSVAKNLDALAPLITDFSSPYCLLCTDDRNPHEIANEGHINFMVKRLIQQHDIPAYLAYRVASWSAAKHFGLRRLGLIAPGYRADINLVSTLDAVDIQRVLIAGEFVDELTLESELEAKLEASSPPLHNTVKHRPITEAELTIPLKEGEYRVIGVVKDELLTNHLVCHFDGQHFAEPGVNKLAVIERYGHQLPPALSLVKGFDIEQGAIATSVGHDSHNIVVIGADEKSMAHAVNHLLEIGGGFCVVQQGEVTADLMLPLGGIMSLERSEKIAEQISDLKTAVKAIGVSLSEPFVQMSFLSLPVIPSLKMTVKGLFDVDQFKFVSLRVDS</sequence>
<evidence type="ECO:0000255" key="1">
    <source>
        <dbReference type="HAMAP-Rule" id="MF_01518"/>
    </source>
</evidence>
<organism>
    <name type="scientific">Shewanella halifaxensis (strain HAW-EB4)</name>
    <dbReference type="NCBI Taxonomy" id="458817"/>
    <lineage>
        <taxon>Bacteria</taxon>
        <taxon>Pseudomonadati</taxon>
        <taxon>Pseudomonadota</taxon>
        <taxon>Gammaproteobacteria</taxon>
        <taxon>Alteromonadales</taxon>
        <taxon>Shewanellaceae</taxon>
        <taxon>Shewanella</taxon>
    </lineage>
</organism>